<keyword id="KW-0025">Alternative splicing</keyword>
<keyword id="KW-0053">Apoptosis</keyword>
<keyword id="KW-0479">Metal-binding</keyword>
<keyword id="KW-0539">Nucleus</keyword>
<keyword id="KW-1267">Proteomics identification</keyword>
<keyword id="KW-1185">Reference proteome</keyword>
<keyword id="KW-0677">Repeat</keyword>
<keyword id="KW-0862">Zinc</keyword>
<keyword id="KW-0863">Zinc-finger</keyword>
<accession>Q569K4</accession>
<accession>Q49A04</accession>
<accession>Q6ZMZ7</accession>
<accession>Q8IY01</accession>
<accession>Q8N8H2</accession>
<accession>Q96DK4</accession>
<dbReference type="EMBL" id="AK057999">
    <property type="protein sequence ID" value="BAB71629.1"/>
    <property type="molecule type" value="mRNA"/>
</dbReference>
<dbReference type="EMBL" id="AK096822">
    <property type="protein sequence ID" value="BAC04870.1"/>
    <property type="molecule type" value="mRNA"/>
</dbReference>
<dbReference type="EMBL" id="AK131432">
    <property type="protein sequence ID" value="BAD18578.1"/>
    <property type="molecule type" value="mRNA"/>
</dbReference>
<dbReference type="EMBL" id="BC038422">
    <property type="protein sequence ID" value="AAH38422.1"/>
    <property type="molecule type" value="mRNA"/>
</dbReference>
<dbReference type="EMBL" id="BC048123">
    <property type="protein sequence ID" value="AAH48123.1"/>
    <property type="molecule type" value="mRNA"/>
</dbReference>
<dbReference type="EMBL" id="BC092423">
    <property type="protein sequence ID" value="AAH92423.1"/>
    <property type="molecule type" value="mRNA"/>
</dbReference>
<dbReference type="CCDS" id="CCDS46463.1">
    <molecule id="Q569K4-2"/>
</dbReference>
<dbReference type="CCDS" id="CCDS46464.1">
    <molecule id="Q569K4-3"/>
</dbReference>
<dbReference type="RefSeq" id="NP_001106868.1">
    <molecule id="Q569K4-2"/>
    <property type="nucleotide sequence ID" value="NM_001113397.2"/>
</dbReference>
<dbReference type="RefSeq" id="NP_001106869.1">
    <molecule id="Q569K4-3"/>
    <property type="nucleotide sequence ID" value="NM_001113398.3"/>
</dbReference>
<dbReference type="RefSeq" id="NP_001269654.1">
    <molecule id="Q569K4-3"/>
    <property type="nucleotide sequence ID" value="NM_001282725.3"/>
</dbReference>
<dbReference type="RefSeq" id="NP_001339742.1">
    <molecule id="Q569K4-3"/>
    <property type="nucleotide sequence ID" value="NM_001352813.2"/>
</dbReference>
<dbReference type="RefSeq" id="NP_001339743.1">
    <molecule id="Q569K4-3"/>
    <property type="nucleotide sequence ID" value="NM_001352814.2"/>
</dbReference>
<dbReference type="RefSeq" id="NP_001339744.1">
    <molecule id="Q569K4-3"/>
    <property type="nucleotide sequence ID" value="NM_001352815.1"/>
</dbReference>
<dbReference type="RefSeq" id="NP_689733.3">
    <property type="nucleotide sequence ID" value="NM_152520.4"/>
</dbReference>
<dbReference type="RefSeq" id="XP_016858927.1">
    <property type="nucleotide sequence ID" value="XM_017003438.1"/>
</dbReference>
<dbReference type="RefSeq" id="XP_016858928.1">
    <property type="nucleotide sequence ID" value="XM_017003439.1"/>
</dbReference>
<dbReference type="BioGRID" id="127344">
    <property type="interactions" value="5"/>
</dbReference>
<dbReference type="FunCoup" id="Q569K4">
    <property type="interactions" value="1183"/>
</dbReference>
<dbReference type="IntAct" id="Q569K4">
    <property type="interactions" value="1"/>
</dbReference>
<dbReference type="STRING" id="9606.ENSP00000386845"/>
<dbReference type="GlyGen" id="Q569K4">
    <property type="glycosylation" value="1 site"/>
</dbReference>
<dbReference type="iPTMnet" id="Q569K4"/>
<dbReference type="PhosphoSitePlus" id="Q569K4"/>
<dbReference type="BioMuta" id="ZNF385B"/>
<dbReference type="DMDM" id="74741028"/>
<dbReference type="MassIVE" id="Q569K4"/>
<dbReference type="PaxDb" id="9606-ENSP00000386845"/>
<dbReference type="PeptideAtlas" id="Q569K4"/>
<dbReference type="ProteomicsDB" id="62574">
    <molecule id="Q569K4-1"/>
</dbReference>
<dbReference type="ProteomicsDB" id="62575">
    <molecule id="Q569K4-2"/>
</dbReference>
<dbReference type="ProteomicsDB" id="62576">
    <molecule id="Q569K4-3"/>
</dbReference>
<dbReference type="ProteomicsDB" id="62577">
    <molecule id="Q569K4-4"/>
</dbReference>
<dbReference type="ProteomicsDB" id="62578">
    <molecule id="Q569K4-5"/>
</dbReference>
<dbReference type="Antibodypedia" id="33976">
    <property type="antibodies" value="235 antibodies from 15 providers"/>
</dbReference>
<dbReference type="DNASU" id="151126"/>
<dbReference type="Ensembl" id="ENST00000336917.9">
    <molecule id="Q569K4-3"/>
    <property type="protein sequence ID" value="ENSP00000338225.5"/>
    <property type="gene ID" value="ENSG00000144331.20"/>
</dbReference>
<dbReference type="Ensembl" id="ENST00000409343.5">
    <molecule id="Q569K4-2"/>
    <property type="protein sequence ID" value="ENSP00000386379.1"/>
    <property type="gene ID" value="ENSG00000144331.20"/>
</dbReference>
<dbReference type="Ensembl" id="ENST00000409692.5">
    <molecule id="Q569K4-3"/>
    <property type="protein sequence ID" value="ENSP00000386507.1"/>
    <property type="gene ID" value="ENSG00000144331.20"/>
</dbReference>
<dbReference type="GeneID" id="151126"/>
<dbReference type="KEGG" id="hsa:151126"/>
<dbReference type="UCSC" id="uc002unj.4">
    <molecule id="Q569K4-1"/>
    <property type="organism name" value="human"/>
</dbReference>
<dbReference type="AGR" id="HGNC:26332"/>
<dbReference type="CTD" id="151126"/>
<dbReference type="DisGeNET" id="151126"/>
<dbReference type="GeneCards" id="ZNF385B"/>
<dbReference type="HGNC" id="HGNC:26332">
    <property type="gene designation" value="ZNF385B"/>
</dbReference>
<dbReference type="HPA" id="ENSG00000144331">
    <property type="expression patterns" value="Tissue enhanced (retina)"/>
</dbReference>
<dbReference type="MalaCards" id="ZNF385B"/>
<dbReference type="MIM" id="612344">
    <property type="type" value="gene"/>
</dbReference>
<dbReference type="neXtProt" id="NX_Q569K4"/>
<dbReference type="OpenTargets" id="ENSG00000144331"/>
<dbReference type="PharmGKB" id="PA162410114"/>
<dbReference type="VEuPathDB" id="HostDB:ENSG00000144331"/>
<dbReference type="eggNOG" id="ENOG502QS7G">
    <property type="taxonomic scope" value="Eukaryota"/>
</dbReference>
<dbReference type="GeneTree" id="ENSGT00940000155611"/>
<dbReference type="HOGENOM" id="CLU_027876_0_0_1"/>
<dbReference type="InParanoid" id="Q569K4"/>
<dbReference type="OMA" id="NYPEDGI"/>
<dbReference type="OrthoDB" id="434647at2759"/>
<dbReference type="PAN-GO" id="Q569K4">
    <property type="GO annotations" value="1 GO annotation based on evolutionary models"/>
</dbReference>
<dbReference type="PhylomeDB" id="Q569K4"/>
<dbReference type="TreeFam" id="TF326622"/>
<dbReference type="PathwayCommons" id="Q569K4"/>
<dbReference type="SignaLink" id="Q569K4"/>
<dbReference type="BioGRID-ORCS" id="151126">
    <property type="hits" value="13 hits in 1149 CRISPR screens"/>
</dbReference>
<dbReference type="ChiTaRS" id="ZNF385B">
    <property type="organism name" value="human"/>
</dbReference>
<dbReference type="GenomeRNAi" id="151126"/>
<dbReference type="Pharos" id="Q569K4">
    <property type="development level" value="Tbio"/>
</dbReference>
<dbReference type="PRO" id="PR:Q569K4"/>
<dbReference type="Proteomes" id="UP000005640">
    <property type="component" value="Chromosome 2"/>
</dbReference>
<dbReference type="RNAct" id="Q569K4">
    <property type="molecule type" value="protein"/>
</dbReference>
<dbReference type="Bgee" id="ENSG00000144331">
    <property type="expression patterns" value="Expressed in cardiac muscle of right atrium and 158 other cell types or tissues"/>
</dbReference>
<dbReference type="ExpressionAtlas" id="Q569K4">
    <property type="expression patterns" value="baseline and differential"/>
</dbReference>
<dbReference type="GO" id="GO:0005634">
    <property type="term" value="C:nucleus"/>
    <property type="evidence" value="ECO:0000314"/>
    <property type="project" value="UniProtKB"/>
</dbReference>
<dbReference type="GO" id="GO:0003676">
    <property type="term" value="F:nucleic acid binding"/>
    <property type="evidence" value="ECO:0007669"/>
    <property type="project" value="InterPro"/>
</dbReference>
<dbReference type="GO" id="GO:0002039">
    <property type="term" value="F:p53 binding"/>
    <property type="evidence" value="ECO:0000353"/>
    <property type="project" value="UniProtKB"/>
</dbReference>
<dbReference type="GO" id="GO:0008270">
    <property type="term" value="F:zinc ion binding"/>
    <property type="evidence" value="ECO:0007669"/>
    <property type="project" value="UniProtKB-KW"/>
</dbReference>
<dbReference type="GO" id="GO:0072332">
    <property type="term" value="P:intrinsic apoptotic signaling pathway by p53 class mediator"/>
    <property type="evidence" value="ECO:0000314"/>
    <property type="project" value="UniProtKB"/>
</dbReference>
<dbReference type="FunFam" id="3.30.160.60:FF:000121">
    <property type="entry name" value="zinc finger protein 385B isoform X1"/>
    <property type="match status" value="1"/>
</dbReference>
<dbReference type="FunFam" id="3.30.160.60:FF:000779">
    <property type="entry name" value="zinc finger protein 385B isoform X1"/>
    <property type="match status" value="1"/>
</dbReference>
<dbReference type="FunFam" id="3.30.160.60:FF:000983">
    <property type="entry name" value="zinc finger protein 385B isoform X1"/>
    <property type="match status" value="1"/>
</dbReference>
<dbReference type="FunFam" id="3.30.160.60:FF:001042">
    <property type="entry name" value="zinc finger protein 385B isoform X1"/>
    <property type="match status" value="1"/>
</dbReference>
<dbReference type="Gene3D" id="3.30.160.60">
    <property type="entry name" value="Classic Zinc Finger"/>
    <property type="match status" value="4"/>
</dbReference>
<dbReference type="InterPro" id="IPR003604">
    <property type="entry name" value="Matrin/U1-like-C_Znf_C2H2"/>
</dbReference>
<dbReference type="InterPro" id="IPR051845">
    <property type="entry name" value="Znf385"/>
</dbReference>
<dbReference type="InterPro" id="IPR036236">
    <property type="entry name" value="Znf_C2H2_sf"/>
</dbReference>
<dbReference type="InterPro" id="IPR013087">
    <property type="entry name" value="Znf_C2H2_type"/>
</dbReference>
<dbReference type="PANTHER" id="PTHR23067">
    <property type="entry name" value="DOUBLE-STRANDED RNA-BINDING ZINC FINGER PROTEIN"/>
    <property type="match status" value="1"/>
</dbReference>
<dbReference type="PANTHER" id="PTHR23067:SF8">
    <property type="entry name" value="ZINC FINGER PROTEIN 385B"/>
    <property type="match status" value="1"/>
</dbReference>
<dbReference type="Pfam" id="PF12874">
    <property type="entry name" value="zf-met"/>
    <property type="match status" value="4"/>
</dbReference>
<dbReference type="SMART" id="SM00355">
    <property type="entry name" value="ZnF_C2H2"/>
    <property type="match status" value="4"/>
</dbReference>
<dbReference type="SMART" id="SM00451">
    <property type="entry name" value="ZnF_U1"/>
    <property type="match status" value="4"/>
</dbReference>
<dbReference type="SUPFAM" id="SSF57667">
    <property type="entry name" value="beta-beta-alpha zinc fingers"/>
    <property type="match status" value="4"/>
</dbReference>
<comment type="function">
    <text evidence="2">May play a role in p53/TP53-mediated apoptosis.</text>
</comment>
<comment type="subunit">
    <text evidence="2">Interacts with p53/TP53; the interaction is direct.</text>
</comment>
<comment type="subcellular location">
    <subcellularLocation>
        <location evidence="2">Nucleus</location>
    </subcellularLocation>
</comment>
<comment type="alternative products">
    <event type="alternative splicing"/>
    <isoform>
        <id>Q569K4-1</id>
        <name>1</name>
        <name>IF-1</name>
        <sequence type="displayed"/>
    </isoform>
    <isoform>
        <id>Q569K4-2</id>
        <name>2</name>
        <name>IF-2</name>
        <sequence type="described" ref="VSP_015974 VSP_015976"/>
    </isoform>
    <isoform>
        <id>Q569K4-3</id>
        <name>3</name>
        <name>IF-3</name>
        <sequence type="described" ref="VSP_015973"/>
    </isoform>
    <isoform>
        <id>Q569K4-4</id>
        <name>4</name>
        <sequence type="described" ref="VSP_015972 VSP_015977 VSP_015978"/>
    </isoform>
    <isoform>
        <id>Q569K4-5</id>
        <name>5</name>
        <sequence type="described" ref="VSP_015975 VSP_015979 VSP_015980"/>
    </isoform>
</comment>
<comment type="tissue specificity">
    <text evidence="2">Detected in germinal center of lymph node (at protein level). Expressed in spleen, lymph node and tonsil.</text>
</comment>
<comment type="miscellaneous">
    <molecule>Isoform 2</molecule>
    <text evidence="6">Major isoform in tonsil.</text>
</comment>
<comment type="miscellaneous">
    <molecule>Isoform 3</molecule>
    <text evidence="6">Major isoform in lymph node.</text>
</comment>
<protein>
    <recommendedName>
        <fullName>Zinc finger protein 385B</fullName>
    </recommendedName>
    <alternativeName>
        <fullName>Zinc finger protein 533</fullName>
    </alternativeName>
</protein>
<feature type="chain" id="PRO_0000191812" description="Zinc finger protein 385B">
    <location>
        <begin position="1"/>
        <end position="471"/>
    </location>
</feature>
<feature type="zinc finger region" description="Matrin-type 1">
    <location>
        <begin position="34"/>
        <end position="64"/>
    </location>
</feature>
<feature type="zinc finger region" description="Matrin-type 2">
    <location>
        <begin position="157"/>
        <end position="187"/>
    </location>
</feature>
<feature type="zinc finger region" description="Matrin-type 3">
    <location>
        <begin position="282"/>
        <end position="316"/>
    </location>
</feature>
<feature type="zinc finger region" description="Matrin-type 4">
    <location>
        <begin position="348"/>
        <end position="378"/>
    </location>
</feature>
<feature type="region of interest" description="Required for induction of apoptosis">
    <location>
        <begin position="1"/>
        <end position="93"/>
    </location>
</feature>
<feature type="region of interest" description="Disordered" evidence="1">
    <location>
        <begin position="50"/>
        <end position="92"/>
    </location>
</feature>
<feature type="region of interest" description="Interaction with p53/TP53" evidence="2">
    <location>
        <begin position="94"/>
        <end position="471"/>
    </location>
</feature>
<feature type="region of interest" description="Disordered" evidence="1">
    <location>
        <begin position="175"/>
        <end position="275"/>
    </location>
</feature>
<feature type="region of interest" description="Disordered" evidence="1">
    <location>
        <begin position="318"/>
        <end position="340"/>
    </location>
</feature>
<feature type="compositionally biased region" description="Low complexity" evidence="1">
    <location>
        <begin position="76"/>
        <end position="92"/>
    </location>
</feature>
<feature type="compositionally biased region" description="Polar residues" evidence="1">
    <location>
        <begin position="206"/>
        <end position="220"/>
    </location>
</feature>
<feature type="compositionally biased region" description="Low complexity" evidence="1">
    <location>
        <begin position="230"/>
        <end position="250"/>
    </location>
</feature>
<feature type="compositionally biased region" description="Polar residues" evidence="1">
    <location>
        <begin position="260"/>
        <end position="269"/>
    </location>
</feature>
<feature type="splice variant" id="VSP_015972" description="In isoform 4." evidence="5">
    <location>
        <begin position="1"/>
        <end position="196"/>
    </location>
</feature>
<feature type="splice variant" id="VSP_015973" description="In isoform 3." evidence="4 5">
    <location>
        <begin position="1"/>
        <end position="102"/>
    </location>
</feature>
<feature type="splice variant" id="VSP_015974" description="In isoform 2." evidence="4">
    <location>
        <begin position="1"/>
        <end position="76"/>
    </location>
</feature>
<feature type="splice variant" id="VSP_015975" description="In isoform 5." evidence="4">
    <original>M</original>
    <variation>MRYSLSPDNHLEDGIM</variation>
    <location>
        <position position="1"/>
    </location>
</feature>
<feature type="splice variant" id="VSP_015976" description="In isoform 2." evidence="4">
    <original>SPSSNSST</original>
    <variation>MWSGLPSR</variation>
    <location>
        <begin position="77"/>
        <end position="84"/>
    </location>
</feature>
<feature type="splice variant" id="VSP_015977" description="In isoform 4." evidence="5">
    <original>HIS</original>
    <variation>PKA</variation>
    <location>
        <begin position="366"/>
        <end position="368"/>
    </location>
</feature>
<feature type="splice variant" id="VSP_015978" description="In isoform 4." evidence="5">
    <location>
        <begin position="369"/>
        <end position="471"/>
    </location>
</feature>
<feature type="splice variant" id="VSP_015979" description="In isoform 5." evidence="4">
    <original>SPYNKLQRSPSILAAKLAFQK</original>
    <variation>TPCKVIGLLPKPLPPANRQLS</variation>
    <location>
        <begin position="386"/>
        <end position="406"/>
    </location>
</feature>
<feature type="splice variant" id="VSP_015980" description="In isoform 5." evidence="4">
    <location>
        <begin position="407"/>
        <end position="471"/>
    </location>
</feature>
<feature type="sequence variant" id="VAR_053765" description="In dbSNP:rs2271761.">
    <original>S</original>
    <variation>G</variation>
    <location>
        <position position="242"/>
    </location>
</feature>
<feature type="sequence variant" id="VAR_076447" evidence="3">
    <original>F</original>
    <variation>Y</variation>
    <location>
        <position position="416"/>
    </location>
</feature>
<feature type="sequence conflict" description="In Ref. 1; BAB71629." evidence="6" ref="1">
    <original>L</original>
    <variation>P</variation>
    <location>
        <position position="254"/>
    </location>
</feature>
<feature type="sequence conflict" description="In Ref. 1; BAC04870." evidence="6" ref="1">
    <original>A</original>
    <variation>S</variation>
    <location>
        <position position="415"/>
    </location>
</feature>
<gene>
    <name type="primary">ZNF385B</name>
    <name type="synonym">ZNF533</name>
</gene>
<evidence type="ECO:0000256" key="1">
    <source>
        <dbReference type="SAM" id="MobiDB-lite"/>
    </source>
</evidence>
<evidence type="ECO:0000269" key="2">
    <source>
    </source>
</evidence>
<evidence type="ECO:0000269" key="3">
    <source>
    </source>
</evidence>
<evidence type="ECO:0000303" key="4">
    <source>
    </source>
</evidence>
<evidence type="ECO:0000303" key="5">
    <source>
    </source>
</evidence>
<evidence type="ECO:0000305" key="6"/>
<organism>
    <name type="scientific">Homo sapiens</name>
    <name type="common">Human</name>
    <dbReference type="NCBI Taxonomy" id="9606"/>
    <lineage>
        <taxon>Eukaryota</taxon>
        <taxon>Metazoa</taxon>
        <taxon>Chordata</taxon>
        <taxon>Craniata</taxon>
        <taxon>Vertebrata</taxon>
        <taxon>Euteleostomi</taxon>
        <taxon>Mammalia</taxon>
        <taxon>Eutheria</taxon>
        <taxon>Euarchontoglires</taxon>
        <taxon>Primates</taxon>
        <taxon>Haplorrhini</taxon>
        <taxon>Catarrhini</taxon>
        <taxon>Hominidae</taxon>
        <taxon>Homo</taxon>
    </lineage>
</organism>
<reference key="1">
    <citation type="journal article" date="2004" name="Nat. Genet.">
        <title>Complete sequencing and characterization of 21,243 full-length human cDNAs.</title>
        <authorList>
            <person name="Ota T."/>
            <person name="Suzuki Y."/>
            <person name="Nishikawa T."/>
            <person name="Otsuki T."/>
            <person name="Sugiyama T."/>
            <person name="Irie R."/>
            <person name="Wakamatsu A."/>
            <person name="Hayashi K."/>
            <person name="Sato H."/>
            <person name="Nagai K."/>
            <person name="Kimura K."/>
            <person name="Makita H."/>
            <person name="Sekine M."/>
            <person name="Obayashi M."/>
            <person name="Nishi T."/>
            <person name="Shibahara T."/>
            <person name="Tanaka T."/>
            <person name="Ishii S."/>
            <person name="Yamamoto J."/>
            <person name="Saito K."/>
            <person name="Kawai Y."/>
            <person name="Isono Y."/>
            <person name="Nakamura Y."/>
            <person name="Nagahari K."/>
            <person name="Murakami K."/>
            <person name="Yasuda T."/>
            <person name="Iwayanagi T."/>
            <person name="Wagatsuma M."/>
            <person name="Shiratori A."/>
            <person name="Sudo H."/>
            <person name="Hosoiri T."/>
            <person name="Kaku Y."/>
            <person name="Kodaira H."/>
            <person name="Kondo H."/>
            <person name="Sugawara M."/>
            <person name="Takahashi M."/>
            <person name="Kanda K."/>
            <person name="Yokoi T."/>
            <person name="Furuya T."/>
            <person name="Kikkawa E."/>
            <person name="Omura Y."/>
            <person name="Abe K."/>
            <person name="Kamihara K."/>
            <person name="Katsuta N."/>
            <person name="Sato K."/>
            <person name="Tanikawa M."/>
            <person name="Yamazaki M."/>
            <person name="Ninomiya K."/>
            <person name="Ishibashi T."/>
            <person name="Yamashita H."/>
            <person name="Murakawa K."/>
            <person name="Fujimori K."/>
            <person name="Tanai H."/>
            <person name="Kimata M."/>
            <person name="Watanabe M."/>
            <person name="Hiraoka S."/>
            <person name="Chiba Y."/>
            <person name="Ishida S."/>
            <person name="Ono Y."/>
            <person name="Takiguchi S."/>
            <person name="Watanabe S."/>
            <person name="Yosida M."/>
            <person name="Hotuta T."/>
            <person name="Kusano J."/>
            <person name="Kanehori K."/>
            <person name="Takahashi-Fujii A."/>
            <person name="Hara H."/>
            <person name="Tanase T.-O."/>
            <person name="Nomura Y."/>
            <person name="Togiya S."/>
            <person name="Komai F."/>
            <person name="Hara R."/>
            <person name="Takeuchi K."/>
            <person name="Arita M."/>
            <person name="Imose N."/>
            <person name="Musashino K."/>
            <person name="Yuuki H."/>
            <person name="Oshima A."/>
            <person name="Sasaki N."/>
            <person name="Aotsuka S."/>
            <person name="Yoshikawa Y."/>
            <person name="Matsunawa H."/>
            <person name="Ichihara T."/>
            <person name="Shiohata N."/>
            <person name="Sano S."/>
            <person name="Moriya S."/>
            <person name="Momiyama H."/>
            <person name="Satoh N."/>
            <person name="Takami S."/>
            <person name="Terashima Y."/>
            <person name="Suzuki O."/>
            <person name="Nakagawa S."/>
            <person name="Senoh A."/>
            <person name="Mizoguchi H."/>
            <person name="Goto Y."/>
            <person name="Shimizu F."/>
            <person name="Wakebe H."/>
            <person name="Hishigaki H."/>
            <person name="Watanabe T."/>
            <person name="Sugiyama A."/>
            <person name="Takemoto M."/>
            <person name="Kawakami B."/>
            <person name="Yamazaki M."/>
            <person name="Watanabe K."/>
            <person name="Kumagai A."/>
            <person name="Itakura S."/>
            <person name="Fukuzumi Y."/>
            <person name="Fujimori Y."/>
            <person name="Komiyama M."/>
            <person name="Tashiro H."/>
            <person name="Tanigami A."/>
            <person name="Fujiwara T."/>
            <person name="Ono T."/>
            <person name="Yamada K."/>
            <person name="Fujii Y."/>
            <person name="Ozaki K."/>
            <person name="Hirao M."/>
            <person name="Ohmori Y."/>
            <person name="Kawabata A."/>
            <person name="Hikiji T."/>
            <person name="Kobatake N."/>
            <person name="Inagaki H."/>
            <person name="Ikema Y."/>
            <person name="Okamoto S."/>
            <person name="Okitani R."/>
            <person name="Kawakami T."/>
            <person name="Noguchi S."/>
            <person name="Itoh T."/>
            <person name="Shigeta K."/>
            <person name="Senba T."/>
            <person name="Matsumura K."/>
            <person name="Nakajima Y."/>
            <person name="Mizuno T."/>
            <person name="Morinaga M."/>
            <person name="Sasaki M."/>
            <person name="Togashi T."/>
            <person name="Oyama M."/>
            <person name="Hata H."/>
            <person name="Watanabe M."/>
            <person name="Komatsu T."/>
            <person name="Mizushima-Sugano J."/>
            <person name="Satoh T."/>
            <person name="Shirai Y."/>
            <person name="Takahashi Y."/>
            <person name="Nakagawa K."/>
            <person name="Okumura K."/>
            <person name="Nagase T."/>
            <person name="Nomura N."/>
            <person name="Kikuchi H."/>
            <person name="Masuho Y."/>
            <person name="Yamashita R."/>
            <person name="Nakai K."/>
            <person name="Yada T."/>
            <person name="Nakamura Y."/>
            <person name="Ohara O."/>
            <person name="Isogai T."/>
            <person name="Sugano S."/>
        </authorList>
    </citation>
    <scope>NUCLEOTIDE SEQUENCE [LARGE SCALE MRNA] (ISOFORMS 2; 3 AND 5)</scope>
    <source>
        <tissue>Gastric mucosa</tissue>
        <tissue>Prostate</tissue>
        <tissue>Synovial cell</tissue>
    </source>
</reference>
<reference key="2">
    <citation type="journal article" date="2004" name="Genome Res.">
        <title>The status, quality, and expansion of the NIH full-length cDNA project: the Mammalian Gene Collection (MGC).</title>
        <authorList>
            <consortium name="The MGC Project Team"/>
        </authorList>
    </citation>
    <scope>NUCLEOTIDE SEQUENCE [LARGE SCALE MRNA] (ISOFORMS 1; 3 AND 4)</scope>
    <source>
        <tissue>Brain</tissue>
        <tissue>Testis</tissue>
    </source>
</reference>
<reference key="3">
    <citation type="journal article" date="2012" name="Eur. J. Immunol.">
        <title>ZNF385B is characteristically expressed in germinal center B cells and involved in B-cell apoptosis.</title>
        <authorList>
            <person name="Iijima K."/>
            <person name="Yamada H."/>
            <person name="Miharu M."/>
            <person name="Imadome K."/>
            <person name="Miyagawa Y."/>
            <person name="Akimoto S."/>
            <person name="Kobayashi K."/>
            <person name="Okita H."/>
            <person name="Nakazawa A."/>
            <person name="Fujiwara S."/>
            <person name="Fujimoto J."/>
            <person name="Kiyokawa N."/>
        </authorList>
    </citation>
    <scope>FUNCTION IN APOPTOSIS</scope>
    <scope>SUBCELLULAR LOCATION</scope>
    <scope>INTERACTION WITH TP53</scope>
    <scope>TISSUE SPECIFICITY</scope>
</reference>
<reference key="4">
    <citation type="journal article" date="2014" name="J. Proteomics">
        <title>An enzyme assisted RP-RPLC approach for in-depth analysis of human liver phosphoproteome.</title>
        <authorList>
            <person name="Bian Y."/>
            <person name="Song C."/>
            <person name="Cheng K."/>
            <person name="Dong M."/>
            <person name="Wang F."/>
            <person name="Huang J."/>
            <person name="Sun D."/>
            <person name="Wang L."/>
            <person name="Ye M."/>
            <person name="Zou H."/>
        </authorList>
    </citation>
    <scope>IDENTIFICATION BY MASS SPECTROMETRY [LARGE SCALE ANALYSIS]</scope>
    <source>
        <tissue>Liver</tissue>
    </source>
</reference>
<reference key="5">
    <citation type="journal article" date="2016" name="Genome Res.">
        <title>Exome sequencing and CRISPR/Cas genome editing identify mutations of ZAK as a cause of limb defects in humans and mice.</title>
        <authorList>
            <person name="Spielmann M."/>
            <person name="Kakar N."/>
            <person name="Tayebi N."/>
            <person name="Leettola C."/>
            <person name="Nuernberg G."/>
            <person name="Sowada N."/>
            <person name="Lupianez D.G."/>
            <person name="Harabula I."/>
            <person name="Floettmann R."/>
            <person name="Horn D."/>
            <person name="Chan W.L."/>
            <person name="Wittler L."/>
            <person name="Yilmaz R."/>
            <person name="Altmueller J."/>
            <person name="Thiele H."/>
            <person name="van Bokhoven H."/>
            <person name="Schwartz C.E."/>
            <person name="Nuernberg P."/>
            <person name="Bowie J.U."/>
            <person name="Ahmad J."/>
            <person name="Kubisch C."/>
            <person name="Mundlos S."/>
            <person name="Borck G."/>
        </authorList>
    </citation>
    <scope>VARIANT TYR-416</scope>
</reference>
<proteinExistence type="evidence at protein level"/>
<sequence>MNMANFLRGFEEKGIKNDRPEDQLSKEKKKILFSFCEVCNIQLNSAAQAQVHSNGKSHRKRVKQLSDGQPPPPAQASPSSNSSTGSTCHTTTLPALVRTPTLMMQPSLDIKPFMSFPVDSSSAVGLFPNFNTMDPVQKAVINHTFGVSIPPKKKQVISCNVCQLRFNSDSQAEAHYKGSKHAKKVKALDATKNKPKMVPSKDSAKANPSCSITPITGNNSDKSEDKGKLKASSSSQPSSSESGSFLLKSGTTPLPPGAATSPSKSTNGAPGTVVESEEEKAKKLLYCSLCKVAVNSLSQLEAHNTGSKHKTMVEARNGAGPIKSYPRPGSRLKMQNGSKGSGLQNKTFHCEICDVHVNSEIQLKQHISSRRHKDRVAGKPLKPKYSPYNKLQRSPSILAAKLAFQKDMMKPLAPAFLSSPLAAAAAVSSALSLPPRPSASLFQAPAIPPALLRPGHGPIRATPASILFAPY</sequence>
<name>Z385B_HUMAN</name>